<dbReference type="EC" id="4.1.1.50" evidence="1"/>
<dbReference type="EMBL" id="CU928161">
    <property type="protein sequence ID" value="CAR01494.1"/>
    <property type="molecule type" value="Genomic_DNA"/>
</dbReference>
<dbReference type="RefSeq" id="WP_000734302.1">
    <property type="nucleotide sequence ID" value="NC_011742.1"/>
</dbReference>
<dbReference type="KEGG" id="ecz:ECS88_0129"/>
<dbReference type="HOGENOM" id="CLU_092007_0_0_6"/>
<dbReference type="UniPathway" id="UPA00331">
    <property type="reaction ID" value="UER00451"/>
</dbReference>
<dbReference type="Proteomes" id="UP000000747">
    <property type="component" value="Chromosome"/>
</dbReference>
<dbReference type="GO" id="GO:0005829">
    <property type="term" value="C:cytosol"/>
    <property type="evidence" value="ECO:0007669"/>
    <property type="project" value="TreeGrafter"/>
</dbReference>
<dbReference type="GO" id="GO:0004014">
    <property type="term" value="F:adenosylmethionine decarboxylase activity"/>
    <property type="evidence" value="ECO:0007669"/>
    <property type="project" value="UniProtKB-UniRule"/>
</dbReference>
<dbReference type="GO" id="GO:0008295">
    <property type="term" value="P:spermidine biosynthetic process"/>
    <property type="evidence" value="ECO:0007669"/>
    <property type="project" value="UniProtKB-UniRule"/>
</dbReference>
<dbReference type="FunFam" id="3.60.90.10:FF:000001">
    <property type="entry name" value="S-adenosylmethionine decarboxylase proenzyme"/>
    <property type="match status" value="1"/>
</dbReference>
<dbReference type="Gene3D" id="3.60.90.10">
    <property type="entry name" value="S-adenosylmethionine decarboxylase"/>
    <property type="match status" value="1"/>
</dbReference>
<dbReference type="HAMAP" id="MF_00465">
    <property type="entry name" value="AdoMetDC_2"/>
    <property type="match status" value="1"/>
</dbReference>
<dbReference type="InterPro" id="IPR003826">
    <property type="entry name" value="AdoMetDC_fam_prok"/>
</dbReference>
<dbReference type="InterPro" id="IPR009165">
    <property type="entry name" value="S-AdoMet_deCO2ase_bac"/>
</dbReference>
<dbReference type="InterPro" id="IPR016067">
    <property type="entry name" value="S-AdoMet_deCO2ase_core"/>
</dbReference>
<dbReference type="NCBIfam" id="TIGR03331">
    <property type="entry name" value="SAM_DCase_Eco"/>
    <property type="match status" value="1"/>
</dbReference>
<dbReference type="PANTHER" id="PTHR33866">
    <property type="entry name" value="S-ADENOSYLMETHIONINE DECARBOXYLASE PROENZYME"/>
    <property type="match status" value="1"/>
</dbReference>
<dbReference type="PANTHER" id="PTHR33866:SF1">
    <property type="entry name" value="S-ADENOSYLMETHIONINE DECARBOXYLASE PROENZYME"/>
    <property type="match status" value="1"/>
</dbReference>
<dbReference type="Pfam" id="PF02675">
    <property type="entry name" value="AdoMet_dc"/>
    <property type="match status" value="1"/>
</dbReference>
<dbReference type="PIRSF" id="PIRSF001356">
    <property type="entry name" value="SAM_decarboxylas"/>
    <property type="match status" value="1"/>
</dbReference>
<dbReference type="SUPFAM" id="SSF56276">
    <property type="entry name" value="S-adenosylmethionine decarboxylase"/>
    <property type="match status" value="1"/>
</dbReference>
<reference key="1">
    <citation type="journal article" date="2009" name="PLoS Genet.">
        <title>Organised genome dynamics in the Escherichia coli species results in highly diverse adaptive paths.</title>
        <authorList>
            <person name="Touchon M."/>
            <person name="Hoede C."/>
            <person name="Tenaillon O."/>
            <person name="Barbe V."/>
            <person name="Baeriswyl S."/>
            <person name="Bidet P."/>
            <person name="Bingen E."/>
            <person name="Bonacorsi S."/>
            <person name="Bouchier C."/>
            <person name="Bouvet O."/>
            <person name="Calteau A."/>
            <person name="Chiapello H."/>
            <person name="Clermont O."/>
            <person name="Cruveiller S."/>
            <person name="Danchin A."/>
            <person name="Diard M."/>
            <person name="Dossat C."/>
            <person name="Karoui M.E."/>
            <person name="Frapy E."/>
            <person name="Garry L."/>
            <person name="Ghigo J.M."/>
            <person name="Gilles A.M."/>
            <person name="Johnson J."/>
            <person name="Le Bouguenec C."/>
            <person name="Lescat M."/>
            <person name="Mangenot S."/>
            <person name="Martinez-Jehanne V."/>
            <person name="Matic I."/>
            <person name="Nassif X."/>
            <person name="Oztas S."/>
            <person name="Petit M.A."/>
            <person name="Pichon C."/>
            <person name="Rouy Z."/>
            <person name="Ruf C.S."/>
            <person name="Schneider D."/>
            <person name="Tourret J."/>
            <person name="Vacherie B."/>
            <person name="Vallenet D."/>
            <person name="Medigue C."/>
            <person name="Rocha E.P.C."/>
            <person name="Denamur E."/>
        </authorList>
    </citation>
    <scope>NUCLEOTIDE SEQUENCE [LARGE SCALE GENOMIC DNA]</scope>
    <source>
        <strain>S88 / ExPEC</strain>
    </source>
</reference>
<accession>B7MBA3</accession>
<organism>
    <name type="scientific">Escherichia coli O45:K1 (strain S88 / ExPEC)</name>
    <dbReference type="NCBI Taxonomy" id="585035"/>
    <lineage>
        <taxon>Bacteria</taxon>
        <taxon>Pseudomonadati</taxon>
        <taxon>Pseudomonadota</taxon>
        <taxon>Gammaproteobacteria</taxon>
        <taxon>Enterobacterales</taxon>
        <taxon>Enterobacteriaceae</taxon>
        <taxon>Escherichia</taxon>
    </lineage>
</organism>
<sequence>MKKLKLHGFNNLTKSLSFCIYDICYAKTTEERDGYIAYIDELYNANRLTEILSETCSIIGANILNIARQDYEPQGASVTILVSEEPVDPKLIDKTEHPGPLPETVVAHLDKSHICVHTYPESHPEGGLCTFRADIEVSTCGVISPLKALNYLIHQLESDIVTIDYRVRGFTRDINGMKHFIDHEINSIQNFMSEDMKALYDMVDVNVYQENIFHTKMLLKEFDLKHYMFHTKPEDLTDSERQEITAALWKEMREIYYGRNMPAV</sequence>
<feature type="chain" id="PRO_1000125477" description="S-adenosylmethionine decarboxylase beta chain" evidence="1">
    <location>
        <begin position="1"/>
        <end position="111"/>
    </location>
</feature>
<feature type="chain" id="PRO_1000125478" description="S-adenosylmethionine decarboxylase alpha chain" evidence="1">
    <location>
        <begin position="112"/>
        <end position="264"/>
    </location>
</feature>
<feature type="active site" description="Schiff-base intermediate with substrate; via pyruvic acid" evidence="1">
    <location>
        <position position="112"/>
    </location>
</feature>
<feature type="active site" description="Proton acceptor; for processing activity" evidence="1">
    <location>
        <position position="117"/>
    </location>
</feature>
<feature type="active site" description="Proton donor; for catalytic activity" evidence="1">
    <location>
        <position position="140"/>
    </location>
</feature>
<feature type="site" description="Cleavage (non-hydrolytic); by autolysis" evidence="1">
    <location>
        <begin position="111"/>
        <end position="112"/>
    </location>
</feature>
<feature type="modified residue" description="Pyruvic acid (Ser); by autocatalysis" evidence="1">
    <location>
        <position position="112"/>
    </location>
</feature>
<protein>
    <recommendedName>
        <fullName evidence="1">S-adenosylmethionine decarboxylase proenzyme</fullName>
        <shortName evidence="1">AdoMetDC</shortName>
        <shortName evidence="1">SAMDC</shortName>
        <ecNumber evidence="1">4.1.1.50</ecNumber>
    </recommendedName>
    <component>
        <recommendedName>
            <fullName evidence="1">S-adenosylmethionine decarboxylase beta chain</fullName>
        </recommendedName>
    </component>
    <component>
        <recommendedName>
            <fullName evidence="1">S-adenosylmethionine decarboxylase alpha chain</fullName>
        </recommendedName>
    </component>
</protein>
<proteinExistence type="inferred from homology"/>
<evidence type="ECO:0000255" key="1">
    <source>
        <dbReference type="HAMAP-Rule" id="MF_00465"/>
    </source>
</evidence>
<comment type="function">
    <text evidence="1">Catalyzes the decarboxylation of S-adenosylmethionine to S-adenosylmethioninamine (dcAdoMet), the propylamine donor required for the synthesis of the polyamines spermine and spermidine from the diamine putrescine.</text>
</comment>
<comment type="catalytic activity">
    <reaction evidence="1">
        <text>S-adenosyl-L-methionine + H(+) = S-adenosyl 3-(methylsulfanyl)propylamine + CO2</text>
        <dbReference type="Rhea" id="RHEA:15981"/>
        <dbReference type="ChEBI" id="CHEBI:15378"/>
        <dbReference type="ChEBI" id="CHEBI:16526"/>
        <dbReference type="ChEBI" id="CHEBI:57443"/>
        <dbReference type="ChEBI" id="CHEBI:59789"/>
        <dbReference type="EC" id="4.1.1.50"/>
    </reaction>
</comment>
<comment type="cofactor">
    <cofactor evidence="1">
        <name>pyruvate</name>
        <dbReference type="ChEBI" id="CHEBI:15361"/>
    </cofactor>
    <text evidence="1">Binds 1 pyruvoyl group covalently per subunit.</text>
</comment>
<comment type="pathway">
    <text evidence="1">Amine and polyamine biosynthesis; S-adenosylmethioninamine biosynthesis; S-adenosylmethioninamine from S-adenosyl-L-methionine: step 1/1.</text>
</comment>
<comment type="subunit">
    <text evidence="1">Heterooctamer of four alpha and four beta chains arranged as a tetramer of alpha/beta heterodimers.</text>
</comment>
<comment type="PTM">
    <text evidence="1">Is synthesized initially as an inactive proenzyme. Formation of the active enzyme involves a self-maturation process in which the active site pyruvoyl group is generated from an internal serine residue via an autocatalytic post-translational modification. Two non-identical subunits are generated from the proenzyme in this reaction, and the pyruvate is formed at the N-terminus of the alpha chain, which is derived from the carboxyl end of the proenzyme. The post-translation cleavage follows an unusual pathway, termed non-hydrolytic serinolysis, in which the side chain hydroxyl group of the serine supplies its oxygen atom to form the C-terminus of the beta chain, while the remainder of the serine residue undergoes an oxidative deamination to produce ammonia and the pyruvoyl group blocking the N-terminus of the alpha chain.</text>
</comment>
<comment type="similarity">
    <text evidence="1">Belongs to the prokaryotic AdoMetDC family. Type 2 subfamily.</text>
</comment>
<keyword id="KW-0068">Autocatalytic cleavage</keyword>
<keyword id="KW-0210">Decarboxylase</keyword>
<keyword id="KW-0456">Lyase</keyword>
<keyword id="KW-0620">Polyamine biosynthesis</keyword>
<keyword id="KW-0670">Pyruvate</keyword>
<keyword id="KW-1185">Reference proteome</keyword>
<keyword id="KW-0949">S-adenosyl-L-methionine</keyword>
<keyword id="KW-0704">Schiff base</keyword>
<keyword id="KW-0745">Spermidine biosynthesis</keyword>
<keyword id="KW-0865">Zymogen</keyword>
<name>SPED_ECO45</name>
<gene>
    <name evidence="1" type="primary">speD</name>
    <name type="ordered locus">ECS88_0129</name>
</gene>